<feature type="chain" id="PRO_0000358047" description="NADH-quinone oxidoreductase subunit C">
    <location>
        <begin position="1"/>
        <end position="215"/>
    </location>
</feature>
<accession>Q7W5A9</accession>
<keyword id="KW-0997">Cell inner membrane</keyword>
<keyword id="KW-1003">Cell membrane</keyword>
<keyword id="KW-0472">Membrane</keyword>
<keyword id="KW-0520">NAD</keyword>
<keyword id="KW-0874">Quinone</keyword>
<keyword id="KW-1278">Translocase</keyword>
<keyword id="KW-0813">Transport</keyword>
<keyword id="KW-0830">Ubiquinone</keyword>
<organism>
    <name type="scientific">Bordetella parapertussis (strain 12822 / ATCC BAA-587 / NCTC 13253)</name>
    <dbReference type="NCBI Taxonomy" id="257311"/>
    <lineage>
        <taxon>Bacteria</taxon>
        <taxon>Pseudomonadati</taxon>
        <taxon>Pseudomonadota</taxon>
        <taxon>Betaproteobacteria</taxon>
        <taxon>Burkholderiales</taxon>
        <taxon>Alcaligenaceae</taxon>
        <taxon>Bordetella</taxon>
    </lineage>
</organism>
<comment type="function">
    <text evidence="1">NDH-1 shuttles electrons from NADH, via FMN and iron-sulfur (Fe-S) centers, to quinones in the respiratory chain. The immediate electron acceptor for the enzyme in this species is believed to be ubiquinone. Couples the redox reaction to proton translocation (for every two electrons transferred, four hydrogen ions are translocated across the cytoplasmic membrane), and thus conserves the redox energy in a proton gradient.</text>
</comment>
<comment type="catalytic activity">
    <reaction evidence="1">
        <text>a quinone + NADH + 5 H(+)(in) = a quinol + NAD(+) + 4 H(+)(out)</text>
        <dbReference type="Rhea" id="RHEA:57888"/>
        <dbReference type="ChEBI" id="CHEBI:15378"/>
        <dbReference type="ChEBI" id="CHEBI:24646"/>
        <dbReference type="ChEBI" id="CHEBI:57540"/>
        <dbReference type="ChEBI" id="CHEBI:57945"/>
        <dbReference type="ChEBI" id="CHEBI:132124"/>
    </reaction>
</comment>
<comment type="subunit">
    <text evidence="1">NDH-1 is composed of 14 different subunits. Subunits NuoB, C, D, E, F, and G constitute the peripheral sector of the complex.</text>
</comment>
<comment type="subcellular location">
    <subcellularLocation>
        <location evidence="1">Cell inner membrane</location>
        <topology evidence="1">Peripheral membrane protein</topology>
        <orientation evidence="1">Cytoplasmic side</orientation>
    </subcellularLocation>
</comment>
<comment type="similarity">
    <text evidence="1">Belongs to the complex I 30 kDa subunit family.</text>
</comment>
<evidence type="ECO:0000255" key="1">
    <source>
        <dbReference type="HAMAP-Rule" id="MF_01357"/>
    </source>
</evidence>
<sequence>MSRFTYAYMMMTRLETLKNNLQAAFGQDLALTESLGELTLEVAAEQWFSACTKLRTDPALRFESCIDLCGVDYLTWGNGTQPEEKTGPVTHGRYAVVVHLLSIEHNWRLRVRTWAPDDEFPMVSSLLECWPGVNWFEREAFDLYGIVFEGHPDLRRILTDYGFIGHPFRKDFPLSGTVEMRYDPEQKRVIYQPVTIDPREITPRVVREGSYGMGR</sequence>
<name>NUOC_BORPA</name>
<dbReference type="EC" id="7.1.1.-" evidence="1"/>
<dbReference type="EMBL" id="BX640433">
    <property type="protein sequence ID" value="CAE38674.1"/>
    <property type="molecule type" value="Genomic_DNA"/>
</dbReference>
<dbReference type="SMR" id="Q7W5A9"/>
<dbReference type="DNASU" id="1665170"/>
<dbReference type="KEGG" id="bpa:BPP3389"/>
<dbReference type="HOGENOM" id="CLU_042628_2_1_4"/>
<dbReference type="Proteomes" id="UP000001421">
    <property type="component" value="Chromosome"/>
</dbReference>
<dbReference type="GO" id="GO:0005886">
    <property type="term" value="C:plasma membrane"/>
    <property type="evidence" value="ECO:0007669"/>
    <property type="project" value="UniProtKB-SubCell"/>
</dbReference>
<dbReference type="GO" id="GO:0008137">
    <property type="term" value="F:NADH dehydrogenase (ubiquinone) activity"/>
    <property type="evidence" value="ECO:0007669"/>
    <property type="project" value="InterPro"/>
</dbReference>
<dbReference type="GO" id="GO:0050136">
    <property type="term" value="F:NADH:ubiquinone reductase (non-electrogenic) activity"/>
    <property type="evidence" value="ECO:0007669"/>
    <property type="project" value="UniProtKB-UniRule"/>
</dbReference>
<dbReference type="GO" id="GO:0048038">
    <property type="term" value="F:quinone binding"/>
    <property type="evidence" value="ECO:0007669"/>
    <property type="project" value="UniProtKB-KW"/>
</dbReference>
<dbReference type="Gene3D" id="3.30.460.80">
    <property type="entry name" value="NADH:ubiquinone oxidoreductase, 30kDa subunit"/>
    <property type="match status" value="1"/>
</dbReference>
<dbReference type="HAMAP" id="MF_01357">
    <property type="entry name" value="NDH1_NuoC"/>
    <property type="match status" value="1"/>
</dbReference>
<dbReference type="InterPro" id="IPR010218">
    <property type="entry name" value="NADH_DH_suC"/>
</dbReference>
<dbReference type="InterPro" id="IPR037232">
    <property type="entry name" value="NADH_quin_OxRdtase_su_C/D-like"/>
</dbReference>
<dbReference type="InterPro" id="IPR001268">
    <property type="entry name" value="NADH_UbQ_OxRdtase_30kDa_su"/>
</dbReference>
<dbReference type="InterPro" id="IPR020396">
    <property type="entry name" value="NADH_UbQ_OxRdtase_CS"/>
</dbReference>
<dbReference type="NCBIfam" id="TIGR01961">
    <property type="entry name" value="NuoC_fam"/>
    <property type="match status" value="1"/>
</dbReference>
<dbReference type="NCBIfam" id="NF004730">
    <property type="entry name" value="PRK06074.1-1"/>
    <property type="match status" value="1"/>
</dbReference>
<dbReference type="PANTHER" id="PTHR10884:SF14">
    <property type="entry name" value="NADH DEHYDROGENASE [UBIQUINONE] IRON-SULFUR PROTEIN 3, MITOCHONDRIAL"/>
    <property type="match status" value="1"/>
</dbReference>
<dbReference type="PANTHER" id="PTHR10884">
    <property type="entry name" value="NADH DEHYDROGENASE UBIQUINONE IRON-SULFUR PROTEIN 3"/>
    <property type="match status" value="1"/>
</dbReference>
<dbReference type="Pfam" id="PF00329">
    <property type="entry name" value="Complex1_30kDa"/>
    <property type="match status" value="1"/>
</dbReference>
<dbReference type="SUPFAM" id="SSF143243">
    <property type="entry name" value="Nqo5-like"/>
    <property type="match status" value="1"/>
</dbReference>
<dbReference type="PROSITE" id="PS00542">
    <property type="entry name" value="COMPLEX1_30K"/>
    <property type="match status" value="1"/>
</dbReference>
<reference key="1">
    <citation type="journal article" date="2003" name="Nat. Genet.">
        <title>Comparative analysis of the genome sequences of Bordetella pertussis, Bordetella parapertussis and Bordetella bronchiseptica.</title>
        <authorList>
            <person name="Parkhill J."/>
            <person name="Sebaihia M."/>
            <person name="Preston A."/>
            <person name="Murphy L.D."/>
            <person name="Thomson N.R."/>
            <person name="Harris D.E."/>
            <person name="Holden M.T.G."/>
            <person name="Churcher C.M."/>
            <person name="Bentley S.D."/>
            <person name="Mungall K.L."/>
            <person name="Cerdeno-Tarraga A.-M."/>
            <person name="Temple L."/>
            <person name="James K.D."/>
            <person name="Harris B."/>
            <person name="Quail M.A."/>
            <person name="Achtman M."/>
            <person name="Atkin R."/>
            <person name="Baker S."/>
            <person name="Basham D."/>
            <person name="Bason N."/>
            <person name="Cherevach I."/>
            <person name="Chillingworth T."/>
            <person name="Collins M."/>
            <person name="Cronin A."/>
            <person name="Davis P."/>
            <person name="Doggett J."/>
            <person name="Feltwell T."/>
            <person name="Goble A."/>
            <person name="Hamlin N."/>
            <person name="Hauser H."/>
            <person name="Holroyd S."/>
            <person name="Jagels K."/>
            <person name="Leather S."/>
            <person name="Moule S."/>
            <person name="Norberczak H."/>
            <person name="O'Neil S."/>
            <person name="Ormond D."/>
            <person name="Price C."/>
            <person name="Rabbinowitsch E."/>
            <person name="Rutter S."/>
            <person name="Sanders M."/>
            <person name="Saunders D."/>
            <person name="Seeger K."/>
            <person name="Sharp S."/>
            <person name="Simmonds M."/>
            <person name="Skelton J."/>
            <person name="Squares R."/>
            <person name="Squares S."/>
            <person name="Stevens K."/>
            <person name="Unwin L."/>
            <person name="Whitehead S."/>
            <person name="Barrell B.G."/>
            <person name="Maskell D.J."/>
        </authorList>
    </citation>
    <scope>NUCLEOTIDE SEQUENCE [LARGE SCALE GENOMIC DNA]</scope>
    <source>
        <strain>12822 / ATCC BAA-587 / NCTC 13253</strain>
    </source>
</reference>
<gene>
    <name evidence="1" type="primary">nuoC</name>
    <name type="ordered locus">BPP3389</name>
</gene>
<proteinExistence type="inferred from homology"/>
<protein>
    <recommendedName>
        <fullName evidence="1">NADH-quinone oxidoreductase subunit C</fullName>
        <ecNumber evidence="1">7.1.1.-</ecNumber>
    </recommendedName>
    <alternativeName>
        <fullName evidence="1">NADH dehydrogenase I subunit C</fullName>
    </alternativeName>
    <alternativeName>
        <fullName evidence="1">NDH-1 subunit C</fullName>
    </alternativeName>
</protein>